<keyword id="KW-0963">Cytoplasm</keyword>
<keyword id="KW-0539">Nucleus</keyword>
<keyword id="KW-0597">Phosphoprotein</keyword>
<keyword id="KW-1185">Reference proteome</keyword>
<keyword id="KW-0832">Ubl conjugation</keyword>
<protein>
    <recommendedName>
        <fullName>DAZ-associated protein 2</fullName>
    </recommendedName>
    <alternativeName>
        <fullName>Deleted in azoospermia-associated protein 2</fullName>
    </alternativeName>
    <alternativeName>
        <fullName evidence="7">Proline-rich protein expressed in brain</fullName>
    </alternativeName>
    <alternativeName>
        <fullName evidence="1">Proline-rich transcript in brain protein</fullName>
    </alternativeName>
</protein>
<organism>
    <name type="scientific">Mus musculus</name>
    <name type="common">Mouse</name>
    <dbReference type="NCBI Taxonomy" id="10090"/>
    <lineage>
        <taxon>Eukaryota</taxon>
        <taxon>Metazoa</taxon>
        <taxon>Chordata</taxon>
        <taxon>Craniata</taxon>
        <taxon>Vertebrata</taxon>
        <taxon>Euteleostomi</taxon>
        <taxon>Mammalia</taxon>
        <taxon>Eutheria</taxon>
        <taxon>Euarchontoglires</taxon>
        <taxon>Glires</taxon>
        <taxon>Rodentia</taxon>
        <taxon>Myomorpha</taxon>
        <taxon>Muroidea</taxon>
        <taxon>Muridae</taxon>
        <taxon>Murinae</taxon>
        <taxon>Mus</taxon>
        <taxon>Mus</taxon>
    </lineage>
</organism>
<evidence type="ECO:0000250" key="1">
    <source>
        <dbReference type="UniProtKB" id="Q15038"/>
    </source>
</evidence>
<evidence type="ECO:0000256" key="2">
    <source>
        <dbReference type="SAM" id="MobiDB-lite"/>
    </source>
</evidence>
<evidence type="ECO:0000269" key="3">
    <source>
    </source>
</evidence>
<evidence type="ECO:0000269" key="4">
    <source>
    </source>
</evidence>
<evidence type="ECO:0000269" key="5">
    <source>
    </source>
</evidence>
<evidence type="ECO:0000269" key="6">
    <source>
    </source>
</evidence>
<evidence type="ECO:0000303" key="7">
    <source>
    </source>
</evidence>
<evidence type="ECO:0000305" key="8"/>
<dbReference type="EMBL" id="AF085348">
    <property type="protein sequence ID" value="AAC34594.1"/>
    <property type="molecule type" value="mRNA"/>
</dbReference>
<dbReference type="EMBL" id="AK002595">
    <property type="protein sequence ID" value="BAB22216.1"/>
    <property type="molecule type" value="mRNA"/>
</dbReference>
<dbReference type="EMBL" id="AK050159">
    <property type="protein sequence ID" value="BAC34100.1"/>
    <property type="molecule type" value="mRNA"/>
</dbReference>
<dbReference type="EMBL" id="AK088916">
    <property type="protein sequence ID" value="BAC40651.1"/>
    <property type="molecule type" value="mRNA"/>
</dbReference>
<dbReference type="EMBL" id="AK132139">
    <property type="protein sequence ID" value="BAE20995.1"/>
    <property type="molecule type" value="mRNA"/>
</dbReference>
<dbReference type="EMBL" id="AK137246">
    <property type="protein sequence ID" value="BAE23285.1"/>
    <property type="molecule type" value="mRNA"/>
</dbReference>
<dbReference type="EMBL" id="AK146970">
    <property type="protein sequence ID" value="BAE27575.1"/>
    <property type="molecule type" value="mRNA"/>
</dbReference>
<dbReference type="EMBL" id="BC014808">
    <property type="protein sequence ID" value="AAH14808.1"/>
    <property type="molecule type" value="mRNA"/>
</dbReference>
<dbReference type="EMBL" id="BC083347">
    <property type="protein sequence ID" value="AAH83347.1"/>
    <property type="molecule type" value="mRNA"/>
</dbReference>
<dbReference type="CCDS" id="CCDS27841.1"/>
<dbReference type="RefSeq" id="NP_036003.2">
    <property type="nucleotide sequence ID" value="NM_011873.2"/>
</dbReference>
<dbReference type="BioGRID" id="204844">
    <property type="interactions" value="5"/>
</dbReference>
<dbReference type="FunCoup" id="Q9DCP9">
    <property type="interactions" value="1991"/>
</dbReference>
<dbReference type="IntAct" id="Q9DCP9">
    <property type="interactions" value="1"/>
</dbReference>
<dbReference type="STRING" id="10090.ENSMUSP00000000356"/>
<dbReference type="iPTMnet" id="Q9DCP9"/>
<dbReference type="PhosphoSitePlus" id="Q9DCP9"/>
<dbReference type="PaxDb" id="10090-ENSMUSP00000000356"/>
<dbReference type="ProteomicsDB" id="277953"/>
<dbReference type="Pumba" id="Q9DCP9"/>
<dbReference type="Antibodypedia" id="26360">
    <property type="antibodies" value="103 antibodies from 22 providers"/>
</dbReference>
<dbReference type="DNASU" id="23994"/>
<dbReference type="Ensembl" id="ENSMUST00000000356.10">
    <property type="protein sequence ID" value="ENSMUSP00000000356.9"/>
    <property type="gene ID" value="ENSMUSG00000000346.10"/>
</dbReference>
<dbReference type="GeneID" id="23994"/>
<dbReference type="KEGG" id="mmu:23994"/>
<dbReference type="UCSC" id="uc007xrt.1">
    <property type="organism name" value="mouse"/>
</dbReference>
<dbReference type="AGR" id="MGI:1344344"/>
<dbReference type="CTD" id="9802"/>
<dbReference type="MGI" id="MGI:1344344">
    <property type="gene designation" value="Dazap2"/>
</dbReference>
<dbReference type="VEuPathDB" id="HostDB:ENSMUSG00000000346"/>
<dbReference type="eggNOG" id="ENOG502QTNQ">
    <property type="taxonomic scope" value="Eukaryota"/>
</dbReference>
<dbReference type="GeneTree" id="ENSGT00390000000685"/>
<dbReference type="HOGENOM" id="CLU_135110_0_0_1"/>
<dbReference type="InParanoid" id="Q9DCP9"/>
<dbReference type="OMA" id="YPQTMPL"/>
<dbReference type="OrthoDB" id="6514304at2759"/>
<dbReference type="PhylomeDB" id="Q9DCP9"/>
<dbReference type="TreeFam" id="TF329672"/>
<dbReference type="BioGRID-ORCS" id="23994">
    <property type="hits" value="2 hits in 77 CRISPR screens"/>
</dbReference>
<dbReference type="ChiTaRS" id="Dazap2">
    <property type="organism name" value="mouse"/>
</dbReference>
<dbReference type="PRO" id="PR:Q9DCP9"/>
<dbReference type="Proteomes" id="UP000000589">
    <property type="component" value="Chromosome 15"/>
</dbReference>
<dbReference type="RNAct" id="Q9DCP9">
    <property type="molecule type" value="protein"/>
</dbReference>
<dbReference type="Bgee" id="ENSMUSG00000000346">
    <property type="expression patterns" value="Expressed in blood and 286 other cell types or tissues"/>
</dbReference>
<dbReference type="GO" id="GO:0005737">
    <property type="term" value="C:cytoplasm"/>
    <property type="evidence" value="ECO:0000250"/>
    <property type="project" value="UniProtKB"/>
</dbReference>
<dbReference type="GO" id="GO:0010494">
    <property type="term" value="C:cytoplasmic stress granule"/>
    <property type="evidence" value="ECO:0000250"/>
    <property type="project" value="UniProtKB"/>
</dbReference>
<dbReference type="GO" id="GO:0016604">
    <property type="term" value="C:nuclear body"/>
    <property type="evidence" value="ECO:0000250"/>
    <property type="project" value="UniProtKB"/>
</dbReference>
<dbReference type="GO" id="GO:0016607">
    <property type="term" value="C:nuclear speck"/>
    <property type="evidence" value="ECO:0000250"/>
    <property type="project" value="UniProtKB"/>
</dbReference>
<dbReference type="GO" id="GO:0005634">
    <property type="term" value="C:nucleus"/>
    <property type="evidence" value="ECO:0000250"/>
    <property type="project" value="UniProtKB"/>
</dbReference>
<dbReference type="GO" id="GO:0005667">
    <property type="term" value="C:transcription regulator complex"/>
    <property type="evidence" value="ECO:0000305"/>
    <property type="project" value="MGI"/>
</dbReference>
<dbReference type="GO" id="GO:0140297">
    <property type="term" value="F:DNA-binding transcription factor binding"/>
    <property type="evidence" value="ECO:0007669"/>
    <property type="project" value="Ensembl"/>
</dbReference>
<dbReference type="GO" id="GO:0042802">
    <property type="term" value="F:identical protein binding"/>
    <property type="evidence" value="ECO:0007669"/>
    <property type="project" value="Ensembl"/>
</dbReference>
<dbReference type="GO" id="GO:0031435">
    <property type="term" value="F:mitogen-activated protein kinase kinase kinase binding"/>
    <property type="evidence" value="ECO:0000353"/>
    <property type="project" value="WormBase"/>
</dbReference>
<dbReference type="GO" id="GO:0002039">
    <property type="term" value="F:p53 binding"/>
    <property type="evidence" value="ECO:0000250"/>
    <property type="project" value="UniProtKB"/>
</dbReference>
<dbReference type="GO" id="GO:0043539">
    <property type="term" value="F:protein serine/threonine kinase activator activity"/>
    <property type="evidence" value="ECO:0000314"/>
    <property type="project" value="WormBase"/>
</dbReference>
<dbReference type="GO" id="GO:0120283">
    <property type="term" value="F:protein serine/threonine kinase binding"/>
    <property type="evidence" value="ECO:0000250"/>
    <property type="project" value="UniProtKB"/>
</dbReference>
<dbReference type="GO" id="GO:0030971">
    <property type="term" value="F:receptor tyrosine kinase binding"/>
    <property type="evidence" value="ECO:0000353"/>
    <property type="project" value="WormBase"/>
</dbReference>
<dbReference type="GO" id="GO:0031625">
    <property type="term" value="F:ubiquitin protein ligase binding"/>
    <property type="evidence" value="ECO:0000250"/>
    <property type="project" value="UniProtKB"/>
</dbReference>
<dbReference type="GO" id="GO:0050699">
    <property type="term" value="F:WW domain binding"/>
    <property type="evidence" value="ECO:0007669"/>
    <property type="project" value="Ensembl"/>
</dbReference>
<dbReference type="GO" id="GO:1905636">
    <property type="term" value="P:positive regulation of RNA polymerase II regulatory region sequence-specific DNA binding"/>
    <property type="evidence" value="ECO:0000315"/>
    <property type="project" value="UniProtKB"/>
</dbReference>
<dbReference type="GO" id="GO:0031648">
    <property type="term" value="P:protein destabilization"/>
    <property type="evidence" value="ECO:0000250"/>
    <property type="project" value="UniProtKB"/>
</dbReference>
<dbReference type="GO" id="GO:0034063">
    <property type="term" value="P:stress granule assembly"/>
    <property type="evidence" value="ECO:0000250"/>
    <property type="project" value="UniProtKB"/>
</dbReference>
<dbReference type="InterPro" id="IPR022730">
    <property type="entry name" value="DAZ_assoc-2"/>
</dbReference>
<dbReference type="PANTHER" id="PTHR31638">
    <property type="entry name" value="DAZ-ASSOCIATED PROTEIN 2"/>
    <property type="match status" value="1"/>
</dbReference>
<dbReference type="PANTHER" id="PTHR31638:SF3">
    <property type="entry name" value="DAZ-ASSOCIATED PROTEIN 2"/>
    <property type="match status" value="1"/>
</dbReference>
<dbReference type="Pfam" id="PF11029">
    <property type="entry name" value="DAZAP2"/>
    <property type="match status" value="1"/>
</dbReference>
<reference key="1">
    <citation type="journal article" date="1999" name="Dev. Dyn.">
        <title>Expression and genetic analysis of prtb, a gene that encodes a highly conserved proline-rich protein expressed in the brain.</title>
        <authorList>
            <person name="Yang W."/>
            <person name="Mansour S.L."/>
        </authorList>
    </citation>
    <scope>NUCLEOTIDE SEQUENCE [MRNA]</scope>
    <scope>TISSUE SPECIFICITY</scope>
    <scope>DEVELOPMENTAL STAGE</scope>
    <source>
        <strain>CD-1</strain>
        <tissue>Brain</tissue>
    </source>
</reference>
<reference key="2">
    <citation type="journal article" date="2005" name="Science">
        <title>The transcriptional landscape of the mammalian genome.</title>
        <authorList>
            <person name="Carninci P."/>
            <person name="Kasukawa T."/>
            <person name="Katayama S."/>
            <person name="Gough J."/>
            <person name="Frith M.C."/>
            <person name="Maeda N."/>
            <person name="Oyama R."/>
            <person name="Ravasi T."/>
            <person name="Lenhard B."/>
            <person name="Wells C."/>
            <person name="Kodzius R."/>
            <person name="Shimokawa K."/>
            <person name="Bajic V.B."/>
            <person name="Brenner S.E."/>
            <person name="Batalov S."/>
            <person name="Forrest A.R."/>
            <person name="Zavolan M."/>
            <person name="Davis M.J."/>
            <person name="Wilming L.G."/>
            <person name="Aidinis V."/>
            <person name="Allen J.E."/>
            <person name="Ambesi-Impiombato A."/>
            <person name="Apweiler R."/>
            <person name="Aturaliya R.N."/>
            <person name="Bailey T.L."/>
            <person name="Bansal M."/>
            <person name="Baxter L."/>
            <person name="Beisel K.W."/>
            <person name="Bersano T."/>
            <person name="Bono H."/>
            <person name="Chalk A.M."/>
            <person name="Chiu K.P."/>
            <person name="Choudhary V."/>
            <person name="Christoffels A."/>
            <person name="Clutterbuck D.R."/>
            <person name="Crowe M.L."/>
            <person name="Dalla E."/>
            <person name="Dalrymple B.P."/>
            <person name="de Bono B."/>
            <person name="Della Gatta G."/>
            <person name="di Bernardo D."/>
            <person name="Down T."/>
            <person name="Engstrom P."/>
            <person name="Fagiolini M."/>
            <person name="Faulkner G."/>
            <person name="Fletcher C.F."/>
            <person name="Fukushima T."/>
            <person name="Furuno M."/>
            <person name="Futaki S."/>
            <person name="Gariboldi M."/>
            <person name="Georgii-Hemming P."/>
            <person name="Gingeras T.R."/>
            <person name="Gojobori T."/>
            <person name="Green R.E."/>
            <person name="Gustincich S."/>
            <person name="Harbers M."/>
            <person name="Hayashi Y."/>
            <person name="Hensch T.K."/>
            <person name="Hirokawa N."/>
            <person name="Hill D."/>
            <person name="Huminiecki L."/>
            <person name="Iacono M."/>
            <person name="Ikeo K."/>
            <person name="Iwama A."/>
            <person name="Ishikawa T."/>
            <person name="Jakt M."/>
            <person name="Kanapin A."/>
            <person name="Katoh M."/>
            <person name="Kawasawa Y."/>
            <person name="Kelso J."/>
            <person name="Kitamura H."/>
            <person name="Kitano H."/>
            <person name="Kollias G."/>
            <person name="Krishnan S.P."/>
            <person name="Kruger A."/>
            <person name="Kummerfeld S.K."/>
            <person name="Kurochkin I.V."/>
            <person name="Lareau L.F."/>
            <person name="Lazarevic D."/>
            <person name="Lipovich L."/>
            <person name="Liu J."/>
            <person name="Liuni S."/>
            <person name="McWilliam S."/>
            <person name="Madan Babu M."/>
            <person name="Madera M."/>
            <person name="Marchionni L."/>
            <person name="Matsuda H."/>
            <person name="Matsuzawa S."/>
            <person name="Miki H."/>
            <person name="Mignone F."/>
            <person name="Miyake S."/>
            <person name="Morris K."/>
            <person name="Mottagui-Tabar S."/>
            <person name="Mulder N."/>
            <person name="Nakano N."/>
            <person name="Nakauchi H."/>
            <person name="Ng P."/>
            <person name="Nilsson R."/>
            <person name="Nishiguchi S."/>
            <person name="Nishikawa S."/>
            <person name="Nori F."/>
            <person name="Ohara O."/>
            <person name="Okazaki Y."/>
            <person name="Orlando V."/>
            <person name="Pang K.C."/>
            <person name="Pavan W.J."/>
            <person name="Pavesi G."/>
            <person name="Pesole G."/>
            <person name="Petrovsky N."/>
            <person name="Piazza S."/>
            <person name="Reed J."/>
            <person name="Reid J.F."/>
            <person name="Ring B.Z."/>
            <person name="Ringwald M."/>
            <person name="Rost B."/>
            <person name="Ruan Y."/>
            <person name="Salzberg S.L."/>
            <person name="Sandelin A."/>
            <person name="Schneider C."/>
            <person name="Schoenbach C."/>
            <person name="Sekiguchi K."/>
            <person name="Semple C.A."/>
            <person name="Seno S."/>
            <person name="Sessa L."/>
            <person name="Sheng Y."/>
            <person name="Shibata Y."/>
            <person name="Shimada H."/>
            <person name="Shimada K."/>
            <person name="Silva D."/>
            <person name="Sinclair B."/>
            <person name="Sperling S."/>
            <person name="Stupka E."/>
            <person name="Sugiura K."/>
            <person name="Sultana R."/>
            <person name="Takenaka Y."/>
            <person name="Taki K."/>
            <person name="Tammoja K."/>
            <person name="Tan S.L."/>
            <person name="Tang S."/>
            <person name="Taylor M.S."/>
            <person name="Tegner J."/>
            <person name="Teichmann S.A."/>
            <person name="Ueda H.R."/>
            <person name="van Nimwegen E."/>
            <person name="Verardo R."/>
            <person name="Wei C.L."/>
            <person name="Yagi K."/>
            <person name="Yamanishi H."/>
            <person name="Zabarovsky E."/>
            <person name="Zhu S."/>
            <person name="Zimmer A."/>
            <person name="Hide W."/>
            <person name="Bult C."/>
            <person name="Grimmond S.M."/>
            <person name="Teasdale R.D."/>
            <person name="Liu E.T."/>
            <person name="Brusic V."/>
            <person name="Quackenbush J."/>
            <person name="Wahlestedt C."/>
            <person name="Mattick J.S."/>
            <person name="Hume D.A."/>
            <person name="Kai C."/>
            <person name="Sasaki D."/>
            <person name="Tomaru Y."/>
            <person name="Fukuda S."/>
            <person name="Kanamori-Katayama M."/>
            <person name="Suzuki M."/>
            <person name="Aoki J."/>
            <person name="Arakawa T."/>
            <person name="Iida J."/>
            <person name="Imamura K."/>
            <person name="Itoh M."/>
            <person name="Kato T."/>
            <person name="Kawaji H."/>
            <person name="Kawagashira N."/>
            <person name="Kawashima T."/>
            <person name="Kojima M."/>
            <person name="Kondo S."/>
            <person name="Konno H."/>
            <person name="Nakano K."/>
            <person name="Ninomiya N."/>
            <person name="Nishio T."/>
            <person name="Okada M."/>
            <person name="Plessy C."/>
            <person name="Shibata K."/>
            <person name="Shiraki T."/>
            <person name="Suzuki S."/>
            <person name="Tagami M."/>
            <person name="Waki K."/>
            <person name="Watahiki A."/>
            <person name="Okamura-Oho Y."/>
            <person name="Suzuki H."/>
            <person name="Kawai J."/>
            <person name="Hayashizaki Y."/>
        </authorList>
    </citation>
    <scope>NUCLEOTIDE SEQUENCE [LARGE SCALE MRNA]</scope>
    <source>
        <strain>C57BL/6J</strain>
        <strain>NOD</strain>
        <tissue>Head</tissue>
        <tissue>Heart</tissue>
        <tissue>Kidney</tissue>
        <tissue>Liver</tissue>
        <tissue>Thymus</tissue>
        <tissue>Urinary bladder</tissue>
    </source>
</reference>
<reference key="3">
    <citation type="journal article" date="2004" name="Genome Res.">
        <title>The status, quality, and expansion of the NIH full-length cDNA project: the Mammalian Gene Collection (MGC).</title>
        <authorList>
            <consortium name="The MGC Project Team"/>
        </authorList>
    </citation>
    <scope>NUCLEOTIDE SEQUENCE [LARGE SCALE MRNA]</scope>
    <source>
        <strain>C57BL/6J</strain>
        <tissue>Brain</tissue>
        <tissue>Eye</tissue>
    </source>
</reference>
<reference key="4">
    <citation type="journal article" date="2002" name="J. Cell. Biochem.">
        <title>Proline-rich transcript of the brain (prtb) is a serum-responsive gene in osteoblasts and upregulated during adhesion.</title>
        <authorList>
            <person name="Sommerfeldt D.W."/>
            <person name="Zhi J."/>
            <person name="Rubin C.T."/>
            <person name="Hadjiargyrou M."/>
        </authorList>
    </citation>
    <scope>INDUCTION</scope>
</reference>
<reference key="5">
    <citation type="journal article" date="2003" name="Nucleic Acids Res.">
        <title>Sox6 regulation of cardiac myocyte development.</title>
        <authorList>
            <person name="Cohen-Barak O."/>
            <person name="Yi Z."/>
            <person name="Hagiwara N."/>
            <person name="Monzen K."/>
            <person name="Komuro I."/>
            <person name="Brilliant M.H."/>
        </authorList>
    </citation>
    <scope>TISSUE SPECIFICITY</scope>
    <scope>INTERACTION WITH SOX6</scope>
</reference>
<reference key="6">
    <citation type="journal article" date="2009" name="Nucleic Acids Res.">
        <title>Dazap2 modulates transcription driven by the Wnt effector TCF-4.</title>
        <authorList>
            <person name="Lukas J."/>
            <person name="Mazna P."/>
            <person name="Valenta T."/>
            <person name="Doubravska L."/>
            <person name="Pospichalova V."/>
            <person name="Vojtechova M."/>
            <person name="Fafilek B."/>
            <person name="Ivanek R."/>
            <person name="Plachy J."/>
            <person name="Novak J."/>
            <person name="Korinek V."/>
        </authorList>
    </citation>
    <scope>FUNCTION</scope>
    <scope>INTERACTION WITH LEF1</scope>
    <scope>TISSUE SPECIFICITY</scope>
</reference>
<gene>
    <name type="primary">Dazap2</name>
    <name evidence="7" type="synonym">Prtb</name>
</gene>
<comment type="function">
    <text evidence="1 6">In unstressed cells, promotes SIAH1-mediated polyubiquitination and degradation of the serine/threonine-protein kinase HIPK2, probably by acting as a loading factor that potentiates complex formation between HIPK2 and ubiquitin ligase SIAH1 (By similarity). In response to DNA damage, localizes to the nucleus following phosphorylation by HIPK2 and modulates the expression of a subset of TP53/p53 target genes by binding to TP53 at target gene promoters (By similarity). This limits the expression of a number of cell death-mediating TP53 target genes, reducing DNA damage-induced cell death (By similarity). Enhances the binding of transcription factor TCF7L2/TCF4, a Wnt signaling pathway effector, to the promoters of target genes (PubMed:19304756). Plays a role in stress granule formation (By similarity).</text>
</comment>
<comment type="subunit">
    <text evidence="1 5 6">Interacts with SOX6 (PubMed:14530442). Interacts with DAZ1 and DAZL (By similarity). Interacts with IL17RB (By similarity). May interact with FAM168B (By similarity). Interacts with INCA1 (By similarity). Interacts with EIF4G1 and EIF4G2 (By similarity). Interacts (via PPAY motif) with NEDD4 (via WW domains) (By similarity). Interacts with transcription factor TCF4; the interaction results in localization of DAZAP2 to the nucleus (By similarity). Interacts with transcription factors TCF7 and TCF7L1 (By similarity). Interacts with transcription factor LEF1 (PubMed:19304756). Interacts with serine/threonine-protein kinase HIPK2; the interaction results in phosphorylation of DAZAP2 which causes localization of DAZAP2 to the nucleus, reduces interaction of DAZAP2 with HIPK2 and prevents DAZAP2-dependent degradation of HIPK2 (By similarity). Interacts with ubiquitin ligase SIAH1; the interaction is decreased following phosphorylation of DAZAP2 by HIPK2 (By similarity). Interacts with TP53; the interaction is triggered by DNA damage (By similarity).</text>
</comment>
<comment type="subcellular location">
    <subcellularLocation>
        <location evidence="1">Cytoplasm</location>
    </subcellularLocation>
    <subcellularLocation>
        <location evidence="1">Nucleus</location>
    </subcellularLocation>
    <subcellularLocation>
        <location evidence="1">Nucleus speckle</location>
    </subcellularLocation>
    <subcellularLocation>
        <location evidence="1">Nucleus</location>
        <location evidence="1">Nuclear body</location>
    </subcellularLocation>
    <subcellularLocation>
        <location evidence="1">Cytoplasm</location>
        <location evidence="1">Stress granule</location>
    </subcellularLocation>
    <text evidence="1">Predominantly nuclear in macrophages, stimulation of IL17RB with its ligand IL17E induces accumulation in the cytoplasm (By similarity). Predominantly cytoplasmic when unphosphorylated and localizes to the nucleus following phosphorylation by HIPK2 (By similarity). Localizes to stress granules under cellular stress conditions (By similarity).</text>
</comment>
<comment type="tissue specificity">
    <text evidence="3 5 6">Widely expressed (PubMed:14530442, PubMed:19304756). Highly expressed in brain (PubMed:10373015).</text>
</comment>
<comment type="developmental stage">
    <text evidence="3">Between 11.5 dpc and 12.5 dpc it is specifically expressed in the developing heart. From 13.5 dpc, expression in the heart disappears, while it becomes strongly expressed in the brain. Up-regulated during adhesion and differentiation to beating cardiomyocytes.</text>
</comment>
<comment type="induction">
    <text evidence="4">By serum stimulation.</text>
</comment>
<comment type="PTM">
    <text evidence="1">Ubiquitinated by SMURF2, leading to proteasomal degradation. Ubiquitinated by NEDD4, leading to proteasomal degradation.</text>
</comment>
<comment type="PTM">
    <text evidence="1">Following DNA damage, phosphorylated by HIPK2 which promotes DAZAP2 localization to the nucleus, reduces interaction of DAZAP2 with HIPK2 and SIAH1, and prevents DAZAP2-dependent ubiquitination of HIPK2 by E3 ubiquitin-protein ligase SIAH1 and subsequent HIPK2 proteasomal degradation.</text>
</comment>
<feature type="chain" id="PRO_0000079789" description="DAZ-associated protein 2">
    <location>
        <begin position="1"/>
        <end position="168"/>
    </location>
</feature>
<feature type="region of interest" description="Disordered" evidence="2">
    <location>
        <begin position="1"/>
        <end position="25"/>
    </location>
</feature>
<feature type="short sequence motif" description="PPAY" evidence="1">
    <location>
        <begin position="39"/>
        <end position="42"/>
    </location>
</feature>
<feature type="compositionally biased region" description="Low complexity" evidence="2">
    <location>
        <begin position="1"/>
        <end position="13"/>
    </location>
</feature>
<feature type="modified residue" description="Phosphoserine" evidence="1">
    <location>
        <position position="77"/>
    </location>
</feature>
<feature type="sequence conflict" description="In Ref. 1; AAC34594." evidence="8" ref="1">
    <original>D</original>
    <variation>N</variation>
    <location>
        <position position="162"/>
    </location>
</feature>
<proteinExistence type="evidence at protein level"/>
<accession>Q9DCP9</accession>
<accession>O88675</accession>
<accession>Q3UVI4</accession>
<name>DAZP2_MOUSE</name>
<sequence>MNSKGQYPTQPTYPVQPPGNPVYPQTLHLPQAPPYTDAPPAYSELYRPSFVHPGAATVPTMSAAFPGASLYLPMAQSVAVGPLGSTIPMAYYPVGPIYPPGSAVLVEGGYDAGARFGAGATAGNIPPPPPGCPPNAAQLAVMQGANVLVTQRKGNFFMGGSDGGYTIW</sequence>